<keyword id="KW-0963">Cytoplasm</keyword>
<keyword id="KW-0238">DNA-binding</keyword>
<keyword id="KW-0804">Transcription</keyword>
<keyword id="KW-0805">Transcription regulation</keyword>
<reference key="1">
    <citation type="journal article" date="2011" name="Appl. Environ. Microbiol.">
        <title>Genomic potential of Marinobacter aquaeolei, a biogeochemical 'opportunitroph'.</title>
        <authorList>
            <person name="Singer E."/>
            <person name="Webb E.A."/>
            <person name="Nelson W.C."/>
            <person name="Heidelberg J.F."/>
            <person name="Ivanova N."/>
            <person name="Pati A."/>
            <person name="Edwards K.J."/>
        </authorList>
    </citation>
    <scope>NUCLEOTIDE SEQUENCE [LARGE SCALE GENOMIC DNA]</scope>
    <source>
        <strain>ATCC 700491 / DSM 11845 / VT8</strain>
    </source>
</reference>
<comment type="subcellular location">
    <subcellularLocation>
        <location evidence="1">Cytoplasm</location>
    </subcellularLocation>
</comment>
<comment type="similarity">
    <text evidence="1">Belongs to the TACO1 family.</text>
</comment>
<sequence>MGRAYQNRKESMAKTAAAKTKVYSKYGREIYMAAKAGGIDPQANLSLRGLIERAKKDQVPTHVIEKAIDKAKGGAGEDYAPARYEGYGPGNCMVIVDCLTDNPNRTFGDVRLAFTKTKCKIGTPGAVAHMFDHCAIFAFAGQDEEAVLEALMEADVDVTDIESEDGKITVFTPNTEYAKAKQALEAAFEGIEFDVDEIQFLPKTTTVVEGDDIPMFEKFLDMLNDLDDVQNVFHNAELPQE</sequence>
<name>Y2154_MARN8</name>
<organism>
    <name type="scientific">Marinobacter nauticus (strain ATCC 700491 / DSM 11845 / VT8)</name>
    <name type="common">Marinobacter aquaeolei</name>
    <dbReference type="NCBI Taxonomy" id="351348"/>
    <lineage>
        <taxon>Bacteria</taxon>
        <taxon>Pseudomonadati</taxon>
        <taxon>Pseudomonadota</taxon>
        <taxon>Gammaproteobacteria</taxon>
        <taxon>Pseudomonadales</taxon>
        <taxon>Marinobacteraceae</taxon>
        <taxon>Marinobacter</taxon>
    </lineage>
</organism>
<dbReference type="EMBL" id="CP000514">
    <property type="protein sequence ID" value="ABM19233.1"/>
    <property type="molecule type" value="Genomic_DNA"/>
</dbReference>
<dbReference type="RefSeq" id="WP_011785624.1">
    <property type="nucleotide sequence ID" value="NC_008740.1"/>
</dbReference>
<dbReference type="SMR" id="A1U2L4"/>
<dbReference type="STRING" id="351348.Maqu_2154"/>
<dbReference type="KEGG" id="maq:Maqu_2154"/>
<dbReference type="eggNOG" id="COG0217">
    <property type="taxonomic scope" value="Bacteria"/>
</dbReference>
<dbReference type="HOGENOM" id="CLU_062974_2_0_6"/>
<dbReference type="OrthoDB" id="9781053at2"/>
<dbReference type="Proteomes" id="UP000000998">
    <property type="component" value="Chromosome"/>
</dbReference>
<dbReference type="GO" id="GO:0005829">
    <property type="term" value="C:cytosol"/>
    <property type="evidence" value="ECO:0007669"/>
    <property type="project" value="TreeGrafter"/>
</dbReference>
<dbReference type="GO" id="GO:0003677">
    <property type="term" value="F:DNA binding"/>
    <property type="evidence" value="ECO:0007669"/>
    <property type="project" value="UniProtKB-UniRule"/>
</dbReference>
<dbReference type="GO" id="GO:0006355">
    <property type="term" value="P:regulation of DNA-templated transcription"/>
    <property type="evidence" value="ECO:0007669"/>
    <property type="project" value="UniProtKB-UniRule"/>
</dbReference>
<dbReference type="FunFam" id="1.10.10.200:FF:000003">
    <property type="entry name" value="Probable transcriptional regulatory protein YeeN"/>
    <property type="match status" value="1"/>
</dbReference>
<dbReference type="Gene3D" id="1.10.10.200">
    <property type="match status" value="1"/>
</dbReference>
<dbReference type="Gene3D" id="3.30.70.980">
    <property type="match status" value="2"/>
</dbReference>
<dbReference type="HAMAP" id="MF_00693">
    <property type="entry name" value="Transcrip_reg_TACO1"/>
    <property type="match status" value="1"/>
</dbReference>
<dbReference type="InterPro" id="IPR017856">
    <property type="entry name" value="Integrase-like_N"/>
</dbReference>
<dbReference type="InterPro" id="IPR048300">
    <property type="entry name" value="TACO1_YebC-like_2nd/3rd_dom"/>
</dbReference>
<dbReference type="InterPro" id="IPR049083">
    <property type="entry name" value="TACO1_YebC_N"/>
</dbReference>
<dbReference type="InterPro" id="IPR002876">
    <property type="entry name" value="Transcrip_reg_TACO1-like"/>
</dbReference>
<dbReference type="InterPro" id="IPR026564">
    <property type="entry name" value="Transcrip_reg_TACO1-like_dom3"/>
</dbReference>
<dbReference type="InterPro" id="IPR029072">
    <property type="entry name" value="YebC-like"/>
</dbReference>
<dbReference type="NCBIfam" id="NF009044">
    <property type="entry name" value="PRK12378.1"/>
    <property type="match status" value="1"/>
</dbReference>
<dbReference type="PANTHER" id="PTHR12532">
    <property type="entry name" value="TRANSLATIONAL ACTIVATOR OF CYTOCHROME C OXIDASE 1"/>
    <property type="match status" value="1"/>
</dbReference>
<dbReference type="PANTHER" id="PTHR12532:SF0">
    <property type="entry name" value="TRANSLATIONAL ACTIVATOR OF CYTOCHROME C OXIDASE 1"/>
    <property type="match status" value="1"/>
</dbReference>
<dbReference type="Pfam" id="PF20772">
    <property type="entry name" value="TACO1_YebC_N"/>
    <property type="match status" value="1"/>
</dbReference>
<dbReference type="Pfam" id="PF01709">
    <property type="entry name" value="Transcrip_reg"/>
    <property type="match status" value="1"/>
</dbReference>
<dbReference type="SUPFAM" id="SSF75625">
    <property type="entry name" value="YebC-like"/>
    <property type="match status" value="1"/>
</dbReference>
<evidence type="ECO:0000255" key="1">
    <source>
        <dbReference type="HAMAP-Rule" id="MF_00693"/>
    </source>
</evidence>
<feature type="chain" id="PRO_1000045333" description="Probable transcriptional regulatory protein Maqu_2154">
    <location>
        <begin position="1"/>
        <end position="241"/>
    </location>
</feature>
<proteinExistence type="inferred from homology"/>
<gene>
    <name type="ordered locus">Maqu_2154</name>
</gene>
<accession>A1U2L4</accession>
<protein>
    <recommendedName>
        <fullName evidence="1">Probable transcriptional regulatory protein Maqu_2154</fullName>
    </recommendedName>
</protein>